<proteinExistence type="inferred from homology"/>
<accession>Q814L8</accession>
<protein>
    <recommendedName>
        <fullName evidence="1">FMN-dependent NADH:quinone oxidoreductase 3</fullName>
        <ecNumber evidence="1">1.6.5.-</ecNumber>
    </recommendedName>
    <alternativeName>
        <fullName evidence="1">Azo-dye reductase 3</fullName>
    </alternativeName>
    <alternativeName>
        <fullName evidence="1">FMN-dependent NADH-azo compound oxidoreductase 3</fullName>
    </alternativeName>
    <alternativeName>
        <fullName evidence="1">FMN-dependent NADH-azoreductase 3</fullName>
        <ecNumber evidence="1">1.7.1.17</ecNumber>
    </alternativeName>
</protein>
<evidence type="ECO:0000255" key="1">
    <source>
        <dbReference type="HAMAP-Rule" id="MF_01216"/>
    </source>
</evidence>
<comment type="function">
    <text evidence="1">Quinone reductase that provides resistance to thiol-specific stress caused by electrophilic quinones.</text>
</comment>
<comment type="function">
    <text evidence="1">Also exhibits azoreductase activity. Catalyzes the reductive cleavage of the azo bond in aromatic azo compounds to the corresponding amines.</text>
</comment>
<comment type="catalytic activity">
    <reaction evidence="1">
        <text>2 a quinone + NADH + H(+) = 2 a 1,4-benzosemiquinone + NAD(+)</text>
        <dbReference type="Rhea" id="RHEA:65952"/>
        <dbReference type="ChEBI" id="CHEBI:15378"/>
        <dbReference type="ChEBI" id="CHEBI:57540"/>
        <dbReference type="ChEBI" id="CHEBI:57945"/>
        <dbReference type="ChEBI" id="CHEBI:132124"/>
        <dbReference type="ChEBI" id="CHEBI:134225"/>
    </reaction>
</comment>
<comment type="catalytic activity">
    <reaction evidence="1">
        <text>N,N-dimethyl-1,4-phenylenediamine + anthranilate + 2 NAD(+) = 2-(4-dimethylaminophenyl)diazenylbenzoate + 2 NADH + 2 H(+)</text>
        <dbReference type="Rhea" id="RHEA:55872"/>
        <dbReference type="ChEBI" id="CHEBI:15378"/>
        <dbReference type="ChEBI" id="CHEBI:15783"/>
        <dbReference type="ChEBI" id="CHEBI:16567"/>
        <dbReference type="ChEBI" id="CHEBI:57540"/>
        <dbReference type="ChEBI" id="CHEBI:57945"/>
        <dbReference type="ChEBI" id="CHEBI:71579"/>
        <dbReference type="EC" id="1.7.1.17"/>
    </reaction>
</comment>
<comment type="cofactor">
    <cofactor evidence="1">
        <name>FMN</name>
        <dbReference type="ChEBI" id="CHEBI:58210"/>
    </cofactor>
    <text evidence="1">Binds 1 FMN per subunit.</text>
</comment>
<comment type="subunit">
    <text evidence="1">Homodimer.</text>
</comment>
<comment type="similarity">
    <text evidence="1">Belongs to the azoreductase type 1 family.</text>
</comment>
<name>AZOR3_BACCR</name>
<reference key="1">
    <citation type="journal article" date="2003" name="Nature">
        <title>Genome sequence of Bacillus cereus and comparative analysis with Bacillus anthracis.</title>
        <authorList>
            <person name="Ivanova N."/>
            <person name="Sorokin A."/>
            <person name="Anderson I."/>
            <person name="Galleron N."/>
            <person name="Candelon B."/>
            <person name="Kapatral V."/>
            <person name="Bhattacharyya A."/>
            <person name="Reznik G."/>
            <person name="Mikhailova N."/>
            <person name="Lapidus A."/>
            <person name="Chu L."/>
            <person name="Mazur M."/>
            <person name="Goltsman E."/>
            <person name="Larsen N."/>
            <person name="D'Souza M."/>
            <person name="Walunas T."/>
            <person name="Grechkin Y."/>
            <person name="Pusch G."/>
            <person name="Haselkorn R."/>
            <person name="Fonstein M."/>
            <person name="Ehrlich S.D."/>
            <person name="Overbeek R."/>
            <person name="Kyrpides N.C."/>
        </authorList>
    </citation>
    <scope>NUCLEOTIDE SEQUENCE [LARGE SCALE GENOMIC DNA]</scope>
    <source>
        <strain>ATCC 14579 / DSM 31 / CCUG 7414 / JCM 2152 / NBRC 15305 / NCIMB 9373 / NCTC 2599 / NRRL B-3711</strain>
    </source>
</reference>
<sequence>MATVLFVKANNRPAEQAVSVKLYEAFLANYKEANPNDTVVELDLYKEELPYVGVDMINGTFKVGKGFDLTEEEAKAVAVADKYLNQFLEADKVVFGFPLWNLTIPAVLHTYIDYLNRAGKTFKYTPEGPVGLIGDKKIALLNARGGVYSEGPAAEVEMAVKYVASMMGFFGATNMETVVIEGHNQFPDKAEEIIAAGLEEAAKVASKF</sequence>
<keyword id="KW-0285">Flavoprotein</keyword>
<keyword id="KW-0288">FMN</keyword>
<keyword id="KW-0520">NAD</keyword>
<keyword id="KW-0560">Oxidoreductase</keyword>
<keyword id="KW-1185">Reference proteome</keyword>
<gene>
    <name evidence="1" type="primary">azoR3</name>
    <name type="ordered locus">BC_5410</name>
</gene>
<organism>
    <name type="scientific">Bacillus cereus (strain ATCC 14579 / DSM 31 / CCUG 7414 / JCM 2152 / NBRC 15305 / NCIMB 9373 / NCTC 2599 / NRRL B-3711)</name>
    <dbReference type="NCBI Taxonomy" id="226900"/>
    <lineage>
        <taxon>Bacteria</taxon>
        <taxon>Bacillati</taxon>
        <taxon>Bacillota</taxon>
        <taxon>Bacilli</taxon>
        <taxon>Bacillales</taxon>
        <taxon>Bacillaceae</taxon>
        <taxon>Bacillus</taxon>
        <taxon>Bacillus cereus group</taxon>
    </lineage>
</organism>
<dbReference type="EC" id="1.6.5.-" evidence="1"/>
<dbReference type="EC" id="1.7.1.17" evidence="1"/>
<dbReference type="EMBL" id="AE016877">
    <property type="protein sequence ID" value="AAP12272.1"/>
    <property type="molecule type" value="Genomic_DNA"/>
</dbReference>
<dbReference type="RefSeq" id="NP_835071.1">
    <property type="nucleotide sequence ID" value="NC_004722.1"/>
</dbReference>
<dbReference type="RefSeq" id="WP_000246741.1">
    <property type="nucleotide sequence ID" value="NZ_CP138336.1"/>
</dbReference>
<dbReference type="SMR" id="Q814L8"/>
<dbReference type="STRING" id="226900.BC_5410"/>
<dbReference type="KEGG" id="bce:BC5410"/>
<dbReference type="PATRIC" id="fig|226900.8.peg.5588"/>
<dbReference type="HOGENOM" id="CLU_088964_3_1_9"/>
<dbReference type="OrthoDB" id="9805013at2"/>
<dbReference type="Proteomes" id="UP000001417">
    <property type="component" value="Chromosome"/>
</dbReference>
<dbReference type="GO" id="GO:0009055">
    <property type="term" value="F:electron transfer activity"/>
    <property type="evidence" value="ECO:0007669"/>
    <property type="project" value="UniProtKB-UniRule"/>
</dbReference>
<dbReference type="GO" id="GO:0010181">
    <property type="term" value="F:FMN binding"/>
    <property type="evidence" value="ECO:0007669"/>
    <property type="project" value="UniProtKB-UniRule"/>
</dbReference>
<dbReference type="GO" id="GO:0016652">
    <property type="term" value="F:oxidoreductase activity, acting on NAD(P)H as acceptor"/>
    <property type="evidence" value="ECO:0007669"/>
    <property type="project" value="UniProtKB-UniRule"/>
</dbReference>
<dbReference type="GO" id="GO:0016655">
    <property type="term" value="F:oxidoreductase activity, acting on NAD(P)H, quinone or similar compound as acceptor"/>
    <property type="evidence" value="ECO:0007669"/>
    <property type="project" value="InterPro"/>
</dbReference>
<dbReference type="Gene3D" id="3.40.50.360">
    <property type="match status" value="1"/>
</dbReference>
<dbReference type="HAMAP" id="MF_01216">
    <property type="entry name" value="Azoreductase_type1"/>
    <property type="match status" value="1"/>
</dbReference>
<dbReference type="InterPro" id="IPR003680">
    <property type="entry name" value="Flavodoxin_fold"/>
</dbReference>
<dbReference type="InterPro" id="IPR029039">
    <property type="entry name" value="Flavoprotein-like_sf"/>
</dbReference>
<dbReference type="InterPro" id="IPR050104">
    <property type="entry name" value="FMN-dep_NADH:Q_OxRdtase_AzoR1"/>
</dbReference>
<dbReference type="InterPro" id="IPR023048">
    <property type="entry name" value="NADH:quinone_OxRdtase_FMN_depd"/>
</dbReference>
<dbReference type="NCBIfam" id="NF010075">
    <property type="entry name" value="PRK13556.1"/>
    <property type="match status" value="1"/>
</dbReference>
<dbReference type="PANTHER" id="PTHR43741">
    <property type="entry name" value="FMN-DEPENDENT NADH-AZOREDUCTASE 1"/>
    <property type="match status" value="1"/>
</dbReference>
<dbReference type="PANTHER" id="PTHR43741:SF4">
    <property type="entry name" value="FMN-DEPENDENT NADH:QUINONE OXIDOREDUCTASE"/>
    <property type="match status" value="1"/>
</dbReference>
<dbReference type="Pfam" id="PF02525">
    <property type="entry name" value="Flavodoxin_2"/>
    <property type="match status" value="1"/>
</dbReference>
<dbReference type="SUPFAM" id="SSF52218">
    <property type="entry name" value="Flavoproteins"/>
    <property type="match status" value="1"/>
</dbReference>
<feature type="chain" id="PRO_0000245883" description="FMN-dependent NADH:quinone oxidoreductase 3">
    <location>
        <begin position="1"/>
        <end position="208"/>
    </location>
</feature>